<accession>B6DCN6</accession>
<dbReference type="EMBL" id="EU925970">
    <property type="protein sequence ID" value="ACI41302.1"/>
    <property type="molecule type" value="mRNA"/>
</dbReference>
<dbReference type="EMBL" id="FM863974">
    <property type="protein sequence ID" value="CAS03572.1"/>
    <property type="molecule type" value="mRNA"/>
</dbReference>
<dbReference type="SMR" id="B6DCN6"/>
<dbReference type="ArachnoServer" id="AS000919">
    <property type="toxin name" value="U1-lycotoxin-Ls1ee"/>
</dbReference>
<dbReference type="GO" id="GO:0005576">
    <property type="term" value="C:extracellular region"/>
    <property type="evidence" value="ECO:0007669"/>
    <property type="project" value="UniProtKB-SubCell"/>
</dbReference>
<dbReference type="GO" id="GO:0090729">
    <property type="term" value="F:toxin activity"/>
    <property type="evidence" value="ECO:0007669"/>
    <property type="project" value="UniProtKB-KW"/>
</dbReference>
<dbReference type="InterPro" id="IPR019553">
    <property type="entry name" value="Spider_toxin_CSTX_knottin"/>
</dbReference>
<dbReference type="InterPro" id="IPR011142">
    <property type="entry name" value="Spider_toxin_CSTX_Knottin_CS"/>
</dbReference>
<dbReference type="Pfam" id="PF10530">
    <property type="entry name" value="Toxin_35"/>
    <property type="match status" value="1"/>
</dbReference>
<dbReference type="PROSITE" id="PS60029">
    <property type="entry name" value="SPIDER_CSTX"/>
    <property type="match status" value="1"/>
</dbReference>
<sequence length="110" mass="12431">MKFVLLFGVLLVTLFSYSSAEMLDDFDQADEDELLSLIEKEEARRDCIPKHHECTSNKHGCCRGHLFKYKCQCTTVVTQSGEETERCFCGTPPHHKAAELVVGFGKKIFG</sequence>
<evidence type="ECO:0000250" key="1"/>
<evidence type="ECO:0000255" key="2"/>
<evidence type="ECO:0000305" key="3"/>
<proteinExistence type="evidence at transcript level"/>
<name>TX147_LYCSI</name>
<keyword id="KW-1015">Disulfide bond</keyword>
<keyword id="KW-0960">Knottin</keyword>
<keyword id="KW-0964">Secreted</keyword>
<keyword id="KW-0732">Signal</keyword>
<keyword id="KW-0800">Toxin</keyword>
<protein>
    <recommendedName>
        <fullName>U1-lycotoxin-Ls1ee</fullName>
    </recommendedName>
    <alternativeName>
        <fullName>Toxin-like structure LSTX-A47</fullName>
    </alternativeName>
</protein>
<comment type="subcellular location">
    <subcellularLocation>
        <location evidence="1">Secreted</location>
    </subcellularLocation>
</comment>
<comment type="tissue specificity">
    <text>Expressed by the venom gland.</text>
</comment>
<comment type="domain">
    <text evidence="1">The presence of a 'disulfide through disulfide knot' structurally defines this protein as a knottin.</text>
</comment>
<comment type="similarity">
    <text evidence="3">Belongs to the neurotoxin 19 (CSTX) family. 03 subfamily.</text>
</comment>
<organism>
    <name type="scientific">Lycosa singoriensis</name>
    <name type="common">Wolf spider</name>
    <name type="synonym">Aranea singoriensis</name>
    <dbReference type="NCBI Taxonomy" id="434756"/>
    <lineage>
        <taxon>Eukaryota</taxon>
        <taxon>Metazoa</taxon>
        <taxon>Ecdysozoa</taxon>
        <taxon>Arthropoda</taxon>
        <taxon>Chelicerata</taxon>
        <taxon>Arachnida</taxon>
        <taxon>Araneae</taxon>
        <taxon>Araneomorphae</taxon>
        <taxon>Entelegynae</taxon>
        <taxon>Lycosoidea</taxon>
        <taxon>Lycosidae</taxon>
        <taxon>Lycosa</taxon>
    </lineage>
</organism>
<feature type="signal peptide" evidence="2">
    <location>
        <begin position="1"/>
        <end position="20"/>
    </location>
</feature>
<feature type="propeptide" id="PRO_0000401589" evidence="1">
    <location>
        <begin position="21"/>
        <end position="44"/>
    </location>
</feature>
<feature type="chain" id="PRO_0000401590" description="U1-lycotoxin-Ls1ee">
    <location>
        <begin position="45"/>
        <end position="110"/>
    </location>
</feature>
<feature type="disulfide bond" evidence="1">
    <location>
        <begin position="47"/>
        <end position="62"/>
    </location>
</feature>
<feature type="disulfide bond" evidence="1">
    <location>
        <begin position="54"/>
        <end position="71"/>
    </location>
</feature>
<feature type="disulfide bond" evidence="1">
    <location>
        <begin position="61"/>
        <end position="89"/>
    </location>
</feature>
<feature type="disulfide bond" evidence="1">
    <location>
        <begin position="73"/>
        <end position="87"/>
    </location>
</feature>
<reference key="1">
    <citation type="journal article" date="2010" name="Zoology">
        <title>Transcriptome analysis of the venom glands of the Chinese wolf spider Lycosa singoriensis.</title>
        <authorList>
            <person name="Zhang Y."/>
            <person name="Chen J."/>
            <person name="Tang X."/>
            <person name="Wang F."/>
            <person name="Jiang L."/>
            <person name="Xiong X."/>
            <person name="Wang M."/>
            <person name="Rong M."/>
            <person name="Liu Z."/>
            <person name="Liang S."/>
        </authorList>
    </citation>
    <scope>NUCLEOTIDE SEQUENCE [LARGE SCALE MRNA]</scope>
    <source>
        <tissue>Venom gland</tissue>
    </source>
</reference>